<sequence>MSQITTKHITVLFRRWMAIICCLIIKIAYLAY</sequence>
<reference key="1">
    <citation type="journal article" date="2001" name="Infect. Immun.">
        <title>Complete DNA sequence of Yersinia enterocolitica serotype 0:8 low-calcium-response plasmid reveals a new virulence plasmid-associated replicon.</title>
        <authorList>
            <person name="Snellings N.J."/>
            <person name="Popek M."/>
            <person name="Lindler L.E."/>
        </authorList>
    </citation>
    <scope>NUCLEOTIDE SEQUENCE [GENOMIC DNA]</scope>
</reference>
<reference key="2">
    <citation type="journal article" date="2006" name="PLoS Genet.">
        <title>The complete genome sequence and comparative genome analysis of the high pathogenicity Yersinia enterocolitica strain 8081.</title>
        <authorList>
            <person name="Thomson N.R."/>
            <person name="Howard S."/>
            <person name="Wren B.W."/>
            <person name="Holden M.T.G."/>
            <person name="Crossman L."/>
            <person name="Challis G.L."/>
            <person name="Churcher C."/>
            <person name="Mungall K."/>
            <person name="Brooks K."/>
            <person name="Chillingworth T."/>
            <person name="Feltwell T."/>
            <person name="Abdellah Z."/>
            <person name="Hauser H."/>
            <person name="Jagels K."/>
            <person name="Maddison M."/>
            <person name="Moule S."/>
            <person name="Sanders M."/>
            <person name="Whitehead S."/>
            <person name="Quail M.A."/>
            <person name="Dougan G."/>
            <person name="Parkhill J."/>
            <person name="Prentice M.B."/>
        </authorList>
    </citation>
    <scope>NUCLEOTIDE SEQUENCE [LARGE SCALE GENOMIC DNA]</scope>
    <source>
        <strain>NCTC 13174 / 8081</strain>
    </source>
</reference>
<organism>
    <name type="scientific">Yersinia enterocolitica serotype O:8 / biotype 1B (strain NCTC 13174 / 8081)</name>
    <dbReference type="NCBI Taxonomy" id="393305"/>
    <lineage>
        <taxon>Bacteria</taxon>
        <taxon>Pseudomonadati</taxon>
        <taxon>Pseudomonadota</taxon>
        <taxon>Gammaproteobacteria</taxon>
        <taxon>Enterobacterales</taxon>
        <taxon>Yersiniaceae</taxon>
        <taxon>Yersinia</taxon>
    </lineage>
</organism>
<proteinExistence type="predicted"/>
<name>YSCA_YERE8</name>
<dbReference type="EMBL" id="AF336309">
    <property type="protein sequence ID" value="AAK69233.1"/>
    <property type="molecule type" value="Genomic_DNA"/>
</dbReference>
<dbReference type="EMBL" id="AM286416">
    <property type="protein sequence ID" value="CAL10058.1"/>
    <property type="molecule type" value="Genomic_DNA"/>
</dbReference>
<dbReference type="RefSeq" id="NP_783685.1">
    <property type="nucleotide sequence ID" value="NC_004564.1"/>
</dbReference>
<dbReference type="RefSeq" id="NP_863533.1">
    <property type="nucleotide sequence ID" value="NC_005017.1"/>
</dbReference>
<dbReference type="RefSeq" id="WP_010891223.1">
    <property type="nucleotide sequence ID" value="NC_008791.1"/>
</dbReference>
<dbReference type="RefSeq" id="YP_001004088.1">
    <property type="nucleotide sequence ID" value="NC_008791.1"/>
</dbReference>
<dbReference type="TCDB" id="3.A.6.1.1">
    <property type="family name" value="the type iii (virulence-related) secretory pathway (iiisp) family"/>
</dbReference>
<dbReference type="GeneID" id="31412288"/>
<dbReference type="KEGG" id="yen:YEP0036"/>
<dbReference type="HOGENOM" id="CLU_3392090_0_0_6"/>
<dbReference type="OrthoDB" id="9887013at2"/>
<dbReference type="PRO" id="PR:A1JU92"/>
<dbReference type="Proteomes" id="UP000000642">
    <property type="component" value="Plasmid pYVe8081"/>
</dbReference>
<dbReference type="InterPro" id="IPR035181">
    <property type="entry name" value="DUF5463"/>
</dbReference>
<dbReference type="Pfam" id="PF17551">
    <property type="entry name" value="DUF5463"/>
    <property type="match status" value="1"/>
</dbReference>
<keyword id="KW-0614">Plasmid</keyword>
<keyword id="KW-0843">Virulence</keyword>
<gene>
    <name type="primary">yscA</name>
    <name type="ordered locus">YEP0036</name>
</gene>
<comment type="miscellaneous">
    <text>Belongs to an operon involved in the translocation of Yop proteins across the bacterial membranes or in the specific control of this function.</text>
</comment>
<feature type="chain" id="PRO_0000281772" description="Yop proteins translocation protein A">
    <location>
        <begin position="1"/>
        <end position="32"/>
    </location>
</feature>
<geneLocation type="plasmid">
    <name>pYVe8081</name>
</geneLocation>
<accession>A1JU92</accession>
<accession>Q01242</accession>
<protein>
    <recommendedName>
        <fullName>Yop proteins translocation protein A</fullName>
    </recommendedName>
</protein>